<proteinExistence type="inferred from homology"/>
<feature type="chain" id="PRO_0000250137" description="3-isopropylmalate dehydrogenase">
    <location>
        <begin position="1"/>
        <end position="365"/>
    </location>
</feature>
<feature type="region of interest" description="Disordered" evidence="2">
    <location>
        <begin position="337"/>
        <end position="365"/>
    </location>
</feature>
<feature type="binding site" evidence="1">
    <location>
        <begin position="80"/>
        <end position="93"/>
    </location>
    <ligand>
        <name>NAD(+)</name>
        <dbReference type="ChEBI" id="CHEBI:57540"/>
    </ligand>
</feature>
<feature type="binding site" evidence="1">
    <location>
        <position position="100"/>
    </location>
    <ligand>
        <name>substrate</name>
    </ligand>
</feature>
<feature type="binding site" evidence="1">
    <location>
        <position position="110"/>
    </location>
    <ligand>
        <name>substrate</name>
    </ligand>
</feature>
<feature type="binding site" evidence="1">
    <location>
        <position position="138"/>
    </location>
    <ligand>
        <name>substrate</name>
    </ligand>
</feature>
<feature type="binding site" evidence="1">
    <location>
        <position position="223"/>
    </location>
    <ligand>
        <name>Mg(2+)</name>
        <dbReference type="ChEBI" id="CHEBI:18420"/>
    </ligand>
</feature>
<feature type="binding site" evidence="1">
    <location>
        <position position="223"/>
    </location>
    <ligand>
        <name>substrate</name>
    </ligand>
</feature>
<feature type="binding site" evidence="1">
    <location>
        <position position="247"/>
    </location>
    <ligand>
        <name>Mg(2+)</name>
        <dbReference type="ChEBI" id="CHEBI:18420"/>
    </ligand>
</feature>
<feature type="binding site" evidence="1">
    <location>
        <position position="251"/>
    </location>
    <ligand>
        <name>Mg(2+)</name>
        <dbReference type="ChEBI" id="CHEBI:18420"/>
    </ligand>
</feature>
<feature type="binding site" evidence="1">
    <location>
        <begin position="280"/>
        <end position="292"/>
    </location>
    <ligand>
        <name>NAD(+)</name>
        <dbReference type="ChEBI" id="CHEBI:57540"/>
    </ligand>
</feature>
<feature type="site" description="Important for catalysis" evidence="1">
    <location>
        <position position="145"/>
    </location>
</feature>
<feature type="site" description="Important for catalysis" evidence="1">
    <location>
        <position position="191"/>
    </location>
</feature>
<organism>
    <name type="scientific">Salinibacter ruber (strain DSM 13855 / M31)</name>
    <dbReference type="NCBI Taxonomy" id="309807"/>
    <lineage>
        <taxon>Bacteria</taxon>
        <taxon>Pseudomonadati</taxon>
        <taxon>Rhodothermota</taxon>
        <taxon>Rhodothermia</taxon>
        <taxon>Rhodothermales</taxon>
        <taxon>Salinibacteraceae</taxon>
        <taxon>Salinibacter</taxon>
    </lineage>
</organism>
<evidence type="ECO:0000255" key="1">
    <source>
        <dbReference type="HAMAP-Rule" id="MF_01033"/>
    </source>
</evidence>
<evidence type="ECO:0000256" key="2">
    <source>
        <dbReference type="SAM" id="MobiDB-lite"/>
    </source>
</evidence>
<evidence type="ECO:0000305" key="3"/>
<reference key="1">
    <citation type="journal article" date="2005" name="Proc. Natl. Acad. Sci. U.S.A.">
        <title>The genome of Salinibacter ruber: convergence and gene exchange among hyperhalophilic bacteria and archaea.</title>
        <authorList>
            <person name="Mongodin E.F."/>
            <person name="Nelson K.E."/>
            <person name="Daugherty S."/>
            <person name="DeBoy R.T."/>
            <person name="Wister J."/>
            <person name="Khouri H."/>
            <person name="Weidman J."/>
            <person name="Walsh D.A."/>
            <person name="Papke R.T."/>
            <person name="Sanchez Perez G."/>
            <person name="Sharma A.K."/>
            <person name="Nesbo C.L."/>
            <person name="MacLeod D."/>
            <person name="Bapteste E."/>
            <person name="Doolittle W.F."/>
            <person name="Charlebois R.L."/>
            <person name="Legault B."/>
            <person name="Rodriguez-Valera F."/>
        </authorList>
    </citation>
    <scope>NUCLEOTIDE SEQUENCE [LARGE SCALE GENOMIC DNA]</scope>
    <source>
        <strain>DSM 13855 / CECT 5946 / M31</strain>
    </source>
</reference>
<sequence length="365" mass="38268">MDDTRSYDIAWLPGDGIGPEVTREALRVLEAVGSAHGFSVTATEHRMGGVALDETGMPLPDSTRDACLESDAVLLGAVGGPKWADNTGDQRPESGLLALRKALGVYANLRPVRVPAALADASPLRPDRVGGTDILFVRELTGGIYFGTPEGRTDDGARSTMAYSDDEIERIAHVAFQRARRRDGNVTSVDKANVLEVSELWREVVTEVHDDCPDVTLRHLYVDNAAMQVVRDPRQFDVVLTGNLFGDILSDLAAALPGSLGLLPSASVGGTVGLFEPVHGSAPDIAGQDVANPTAAILSAALLLDEVGETAAADAVRHGVDAALDAGFRTADLAADNEEDASTSAFGREVATRAADSVPQNAPTP</sequence>
<accession>Q2S0M8</accession>
<keyword id="KW-0028">Amino-acid biosynthesis</keyword>
<keyword id="KW-0100">Branched-chain amino acid biosynthesis</keyword>
<keyword id="KW-0963">Cytoplasm</keyword>
<keyword id="KW-0432">Leucine biosynthesis</keyword>
<keyword id="KW-0460">Magnesium</keyword>
<keyword id="KW-0464">Manganese</keyword>
<keyword id="KW-0479">Metal-binding</keyword>
<keyword id="KW-0520">NAD</keyword>
<keyword id="KW-0560">Oxidoreductase</keyword>
<keyword id="KW-1185">Reference proteome</keyword>
<gene>
    <name evidence="1" type="primary">leuB</name>
    <name type="ordered locus">SRU_2148</name>
</gene>
<comment type="function">
    <text evidence="1">Catalyzes the oxidation of 3-carboxy-2-hydroxy-4-methylpentanoate (3-isopropylmalate) to 3-carboxy-4-methyl-2-oxopentanoate. The product decarboxylates to 4-methyl-2 oxopentanoate.</text>
</comment>
<comment type="catalytic activity">
    <reaction evidence="1">
        <text>(2R,3S)-3-isopropylmalate + NAD(+) = 4-methyl-2-oxopentanoate + CO2 + NADH</text>
        <dbReference type="Rhea" id="RHEA:32271"/>
        <dbReference type="ChEBI" id="CHEBI:16526"/>
        <dbReference type="ChEBI" id="CHEBI:17865"/>
        <dbReference type="ChEBI" id="CHEBI:35121"/>
        <dbReference type="ChEBI" id="CHEBI:57540"/>
        <dbReference type="ChEBI" id="CHEBI:57945"/>
        <dbReference type="EC" id="1.1.1.85"/>
    </reaction>
</comment>
<comment type="cofactor">
    <cofactor evidence="1">
        <name>Mg(2+)</name>
        <dbReference type="ChEBI" id="CHEBI:18420"/>
    </cofactor>
    <cofactor evidence="1">
        <name>Mn(2+)</name>
        <dbReference type="ChEBI" id="CHEBI:29035"/>
    </cofactor>
    <text evidence="1">Binds 1 Mg(2+) or Mn(2+) ion per subunit.</text>
</comment>
<comment type="pathway">
    <text evidence="1">Amino-acid biosynthesis; L-leucine biosynthesis; L-leucine from 3-methyl-2-oxobutanoate: step 3/4.</text>
</comment>
<comment type="subunit">
    <text evidence="1">Homodimer.</text>
</comment>
<comment type="subcellular location">
    <subcellularLocation>
        <location evidence="1">Cytoplasm</location>
    </subcellularLocation>
</comment>
<comment type="similarity">
    <text evidence="1">Belongs to the isocitrate and isopropylmalate dehydrogenases family. LeuB type 1 subfamily.</text>
</comment>
<comment type="sequence caution" evidence="3">
    <conflict type="erroneous initiation">
        <sequence resource="EMBL-CDS" id="ABC45481"/>
    </conflict>
</comment>
<name>LEU3_SALRD</name>
<protein>
    <recommendedName>
        <fullName evidence="1">3-isopropylmalate dehydrogenase</fullName>
        <ecNumber evidence="1">1.1.1.85</ecNumber>
    </recommendedName>
    <alternativeName>
        <fullName evidence="1">3-IPM-DH</fullName>
    </alternativeName>
    <alternativeName>
        <fullName evidence="1">Beta-IPM dehydrogenase</fullName>
        <shortName evidence="1">IMDH</shortName>
    </alternativeName>
</protein>
<dbReference type="EC" id="1.1.1.85" evidence="1"/>
<dbReference type="EMBL" id="CP000159">
    <property type="protein sequence ID" value="ABC45481.1"/>
    <property type="status" value="ALT_INIT"/>
    <property type="molecule type" value="Genomic_DNA"/>
</dbReference>
<dbReference type="RefSeq" id="YP_446253.1">
    <property type="nucleotide sequence ID" value="NC_007677.1"/>
</dbReference>
<dbReference type="SMR" id="Q2S0M8"/>
<dbReference type="STRING" id="309807.SRU_2148"/>
<dbReference type="EnsemblBacteria" id="ABC45481">
    <property type="protein sequence ID" value="ABC45481"/>
    <property type="gene ID" value="SRU_2148"/>
</dbReference>
<dbReference type="KEGG" id="sru:SRU_2148"/>
<dbReference type="PATRIC" id="fig|309807.25.peg.2233"/>
<dbReference type="eggNOG" id="COG0473">
    <property type="taxonomic scope" value="Bacteria"/>
</dbReference>
<dbReference type="HOGENOM" id="CLU_031953_0_3_10"/>
<dbReference type="OrthoDB" id="9806254at2"/>
<dbReference type="UniPathway" id="UPA00048">
    <property type="reaction ID" value="UER00072"/>
</dbReference>
<dbReference type="Proteomes" id="UP000008674">
    <property type="component" value="Chromosome"/>
</dbReference>
<dbReference type="GO" id="GO:0005829">
    <property type="term" value="C:cytosol"/>
    <property type="evidence" value="ECO:0007669"/>
    <property type="project" value="TreeGrafter"/>
</dbReference>
<dbReference type="GO" id="GO:0003862">
    <property type="term" value="F:3-isopropylmalate dehydrogenase activity"/>
    <property type="evidence" value="ECO:0007669"/>
    <property type="project" value="UniProtKB-UniRule"/>
</dbReference>
<dbReference type="GO" id="GO:0000287">
    <property type="term" value="F:magnesium ion binding"/>
    <property type="evidence" value="ECO:0007669"/>
    <property type="project" value="InterPro"/>
</dbReference>
<dbReference type="GO" id="GO:0051287">
    <property type="term" value="F:NAD binding"/>
    <property type="evidence" value="ECO:0007669"/>
    <property type="project" value="InterPro"/>
</dbReference>
<dbReference type="GO" id="GO:0009098">
    <property type="term" value="P:L-leucine biosynthetic process"/>
    <property type="evidence" value="ECO:0007669"/>
    <property type="project" value="UniProtKB-UniRule"/>
</dbReference>
<dbReference type="FunFam" id="3.40.718.10:FF:000006">
    <property type="entry name" value="3-isopropylmalate dehydrogenase"/>
    <property type="match status" value="1"/>
</dbReference>
<dbReference type="Gene3D" id="3.40.718.10">
    <property type="entry name" value="Isopropylmalate Dehydrogenase"/>
    <property type="match status" value="1"/>
</dbReference>
<dbReference type="HAMAP" id="MF_01033">
    <property type="entry name" value="LeuB_type1"/>
    <property type="match status" value="1"/>
</dbReference>
<dbReference type="InterPro" id="IPR019818">
    <property type="entry name" value="IsoCit/isopropylmalate_DH_CS"/>
</dbReference>
<dbReference type="InterPro" id="IPR024084">
    <property type="entry name" value="IsoPropMal-DH-like_dom"/>
</dbReference>
<dbReference type="InterPro" id="IPR004429">
    <property type="entry name" value="Isopropylmalate_DH"/>
</dbReference>
<dbReference type="NCBIfam" id="TIGR00169">
    <property type="entry name" value="leuB"/>
    <property type="match status" value="1"/>
</dbReference>
<dbReference type="PANTHER" id="PTHR42979">
    <property type="entry name" value="3-ISOPROPYLMALATE DEHYDROGENASE"/>
    <property type="match status" value="1"/>
</dbReference>
<dbReference type="PANTHER" id="PTHR42979:SF1">
    <property type="entry name" value="3-ISOPROPYLMALATE DEHYDROGENASE"/>
    <property type="match status" value="1"/>
</dbReference>
<dbReference type="Pfam" id="PF00180">
    <property type="entry name" value="Iso_dh"/>
    <property type="match status" value="1"/>
</dbReference>
<dbReference type="SMART" id="SM01329">
    <property type="entry name" value="Iso_dh"/>
    <property type="match status" value="1"/>
</dbReference>
<dbReference type="SUPFAM" id="SSF53659">
    <property type="entry name" value="Isocitrate/Isopropylmalate dehydrogenase-like"/>
    <property type="match status" value="1"/>
</dbReference>
<dbReference type="PROSITE" id="PS00470">
    <property type="entry name" value="IDH_IMDH"/>
    <property type="match status" value="1"/>
</dbReference>